<evidence type="ECO:0000255" key="1">
    <source>
        <dbReference type="HAMAP-Rule" id="MF_01326"/>
    </source>
</evidence>
<evidence type="ECO:0000305" key="2"/>
<protein>
    <recommendedName>
        <fullName evidence="1">Large ribosomal subunit protein uL24</fullName>
    </recommendedName>
    <alternativeName>
        <fullName evidence="2">50S ribosomal protein L24</fullName>
    </alternativeName>
</protein>
<sequence>MAAKIRRDDEVIVLTGKDKGKRGKVKNVLSSGKVIVEGINLVKKHQKPVPALNQPGGIVEKEAAIQVSNVAIFNAATGKADRVGFRFEDGKKVRFFKSNSETIK</sequence>
<name>RL24_ECOBW</name>
<gene>
    <name evidence="1" type="primary">rplX</name>
    <name type="ordered locus">BWG_3000</name>
</gene>
<feature type="chain" id="PRO_1000214540" description="Large ribosomal subunit protein uL24">
    <location>
        <begin position="1"/>
        <end position="104"/>
    </location>
</feature>
<accession>C4ZUG4</accession>
<comment type="function">
    <text evidence="1">One of two assembly initiator proteins, it binds directly to the 5'-end of the 23S rRNA, where it nucleates assembly of the 50S subunit.</text>
</comment>
<comment type="function">
    <text evidence="1">One of the proteins that surrounds the polypeptide exit tunnel on the outside of the subunit.</text>
</comment>
<comment type="subunit">
    <text evidence="1">Part of the 50S ribosomal subunit.</text>
</comment>
<comment type="similarity">
    <text evidence="1">Belongs to the universal ribosomal protein uL24 family.</text>
</comment>
<keyword id="KW-0687">Ribonucleoprotein</keyword>
<keyword id="KW-0689">Ribosomal protein</keyword>
<keyword id="KW-0694">RNA-binding</keyword>
<keyword id="KW-0699">rRNA-binding</keyword>
<reference key="1">
    <citation type="journal article" date="2009" name="J. Bacteriol.">
        <title>Genomic sequencing reveals regulatory mutations and recombinational events in the widely used MC4100 lineage of Escherichia coli K-12.</title>
        <authorList>
            <person name="Ferenci T."/>
            <person name="Zhou Z."/>
            <person name="Betteridge T."/>
            <person name="Ren Y."/>
            <person name="Liu Y."/>
            <person name="Feng L."/>
            <person name="Reeves P.R."/>
            <person name="Wang L."/>
        </authorList>
    </citation>
    <scope>NUCLEOTIDE SEQUENCE [LARGE SCALE GENOMIC DNA]</scope>
    <source>
        <strain>K12 / MC4100 / BW2952</strain>
    </source>
</reference>
<organism>
    <name type="scientific">Escherichia coli (strain K12 / MC4100 / BW2952)</name>
    <dbReference type="NCBI Taxonomy" id="595496"/>
    <lineage>
        <taxon>Bacteria</taxon>
        <taxon>Pseudomonadati</taxon>
        <taxon>Pseudomonadota</taxon>
        <taxon>Gammaproteobacteria</taxon>
        <taxon>Enterobacterales</taxon>
        <taxon>Enterobacteriaceae</taxon>
        <taxon>Escherichia</taxon>
    </lineage>
</organism>
<proteinExistence type="inferred from homology"/>
<dbReference type="EMBL" id="CP001396">
    <property type="protein sequence ID" value="ACR61861.1"/>
    <property type="molecule type" value="Genomic_DNA"/>
</dbReference>
<dbReference type="RefSeq" id="WP_000729185.1">
    <property type="nucleotide sequence ID" value="NC_012759.1"/>
</dbReference>
<dbReference type="SMR" id="C4ZUG4"/>
<dbReference type="GeneID" id="93778678"/>
<dbReference type="KEGG" id="ebw:BWG_3000"/>
<dbReference type="HOGENOM" id="CLU_093315_2_2_6"/>
<dbReference type="GO" id="GO:0005829">
    <property type="term" value="C:cytosol"/>
    <property type="evidence" value="ECO:0007669"/>
    <property type="project" value="UniProtKB-ARBA"/>
</dbReference>
<dbReference type="GO" id="GO:1990904">
    <property type="term" value="C:ribonucleoprotein complex"/>
    <property type="evidence" value="ECO:0007669"/>
    <property type="project" value="UniProtKB-KW"/>
</dbReference>
<dbReference type="GO" id="GO:0005840">
    <property type="term" value="C:ribosome"/>
    <property type="evidence" value="ECO:0007669"/>
    <property type="project" value="UniProtKB-KW"/>
</dbReference>
<dbReference type="GO" id="GO:0019843">
    <property type="term" value="F:rRNA binding"/>
    <property type="evidence" value="ECO:0007669"/>
    <property type="project" value="UniProtKB-UniRule"/>
</dbReference>
<dbReference type="GO" id="GO:0003735">
    <property type="term" value="F:structural constituent of ribosome"/>
    <property type="evidence" value="ECO:0007669"/>
    <property type="project" value="InterPro"/>
</dbReference>
<dbReference type="GO" id="GO:0006412">
    <property type="term" value="P:translation"/>
    <property type="evidence" value="ECO:0007669"/>
    <property type="project" value="UniProtKB-UniRule"/>
</dbReference>
<dbReference type="CDD" id="cd06089">
    <property type="entry name" value="KOW_RPL26"/>
    <property type="match status" value="1"/>
</dbReference>
<dbReference type="FunFam" id="2.30.30.30:FF:000004">
    <property type="entry name" value="50S ribosomal protein L24"/>
    <property type="match status" value="1"/>
</dbReference>
<dbReference type="Gene3D" id="2.30.30.30">
    <property type="match status" value="1"/>
</dbReference>
<dbReference type="HAMAP" id="MF_01326_B">
    <property type="entry name" value="Ribosomal_uL24_B"/>
    <property type="match status" value="1"/>
</dbReference>
<dbReference type="InterPro" id="IPR005824">
    <property type="entry name" value="KOW"/>
</dbReference>
<dbReference type="InterPro" id="IPR014722">
    <property type="entry name" value="Rib_uL2_dom2"/>
</dbReference>
<dbReference type="InterPro" id="IPR003256">
    <property type="entry name" value="Ribosomal_uL24"/>
</dbReference>
<dbReference type="InterPro" id="IPR005825">
    <property type="entry name" value="Ribosomal_uL24_CS"/>
</dbReference>
<dbReference type="InterPro" id="IPR041988">
    <property type="entry name" value="Ribosomal_uL24_KOW"/>
</dbReference>
<dbReference type="InterPro" id="IPR008991">
    <property type="entry name" value="Translation_prot_SH3-like_sf"/>
</dbReference>
<dbReference type="NCBIfam" id="TIGR01079">
    <property type="entry name" value="rplX_bact"/>
    <property type="match status" value="1"/>
</dbReference>
<dbReference type="PANTHER" id="PTHR12903">
    <property type="entry name" value="MITOCHONDRIAL RIBOSOMAL PROTEIN L24"/>
    <property type="match status" value="1"/>
</dbReference>
<dbReference type="Pfam" id="PF00467">
    <property type="entry name" value="KOW"/>
    <property type="match status" value="1"/>
</dbReference>
<dbReference type="Pfam" id="PF17136">
    <property type="entry name" value="ribosomal_L24"/>
    <property type="match status" value="1"/>
</dbReference>
<dbReference type="SMART" id="SM00739">
    <property type="entry name" value="KOW"/>
    <property type="match status" value="1"/>
</dbReference>
<dbReference type="SUPFAM" id="SSF50104">
    <property type="entry name" value="Translation proteins SH3-like domain"/>
    <property type="match status" value="1"/>
</dbReference>
<dbReference type="PROSITE" id="PS01108">
    <property type="entry name" value="RIBOSOMAL_L24"/>
    <property type="match status" value="1"/>
</dbReference>